<proteinExistence type="inferred from homology"/>
<organism>
    <name type="scientific">Candida glabrata (strain ATCC 2001 / BCRC 20586 / JCM 3761 / NBRC 0622 / NRRL Y-65 / CBS 138)</name>
    <name type="common">Yeast</name>
    <name type="synonym">Nakaseomyces glabratus</name>
    <dbReference type="NCBI Taxonomy" id="284593"/>
    <lineage>
        <taxon>Eukaryota</taxon>
        <taxon>Fungi</taxon>
        <taxon>Dikarya</taxon>
        <taxon>Ascomycota</taxon>
        <taxon>Saccharomycotina</taxon>
        <taxon>Saccharomycetes</taxon>
        <taxon>Saccharomycetales</taxon>
        <taxon>Saccharomycetaceae</taxon>
        <taxon>Nakaseomyces</taxon>
    </lineage>
</organism>
<comment type="function">
    <text evidence="1">Required for efficient biogenesis of the 60S ribosomal subunit.</text>
</comment>
<comment type="subunit">
    <text evidence="1">Associates with nucleolar pre-ribosomal particles.</text>
</comment>
<comment type="subcellular location">
    <subcellularLocation>
        <location evidence="1">Nucleus</location>
        <location evidence="1">Nucleolus</location>
    </subcellularLocation>
</comment>
<comment type="similarity">
    <text evidence="3">Belongs to the RSA3 family.</text>
</comment>
<gene>
    <name type="primary">RSA3</name>
    <name type="ordered locus">CAGL0C00715g</name>
</gene>
<dbReference type="EMBL" id="CR380949">
    <property type="protein sequence ID" value="CAG58117.1"/>
    <property type="molecule type" value="Genomic_DNA"/>
</dbReference>
<dbReference type="RefSeq" id="XP_445213.1">
    <property type="nucleotide sequence ID" value="XM_445213.1"/>
</dbReference>
<dbReference type="SMR" id="Q6FX31"/>
<dbReference type="FunCoup" id="Q6FX31">
    <property type="interactions" value="301"/>
</dbReference>
<dbReference type="STRING" id="284593.Q6FX31"/>
<dbReference type="EnsemblFungi" id="CAGL0C00715g-T">
    <property type="protein sequence ID" value="CAGL0C00715g-T-p1"/>
    <property type="gene ID" value="CAGL0C00715g"/>
</dbReference>
<dbReference type="KEGG" id="cgr:2886879"/>
<dbReference type="CGD" id="CAL0127294">
    <property type="gene designation" value="CAGL0C00715g"/>
</dbReference>
<dbReference type="VEuPathDB" id="FungiDB:CAGL0C00715g"/>
<dbReference type="eggNOG" id="ENOG502S5DP">
    <property type="taxonomic scope" value="Eukaryota"/>
</dbReference>
<dbReference type="HOGENOM" id="CLU_119118_0_0_1"/>
<dbReference type="InParanoid" id="Q6FX31"/>
<dbReference type="OMA" id="DAHNNNK"/>
<dbReference type="Proteomes" id="UP000002428">
    <property type="component" value="Chromosome C"/>
</dbReference>
<dbReference type="GO" id="GO:0005730">
    <property type="term" value="C:nucleolus"/>
    <property type="evidence" value="ECO:0007669"/>
    <property type="project" value="UniProtKB-SubCell"/>
</dbReference>
<dbReference type="GO" id="GO:0030687">
    <property type="term" value="C:preribosome, large subunit precursor"/>
    <property type="evidence" value="ECO:0007669"/>
    <property type="project" value="EnsemblFungi"/>
</dbReference>
<dbReference type="GO" id="GO:0000027">
    <property type="term" value="P:ribosomal large subunit assembly"/>
    <property type="evidence" value="ECO:0007669"/>
    <property type="project" value="EnsemblFungi"/>
</dbReference>
<dbReference type="InterPro" id="IPR051898">
    <property type="entry name" value="Ribosome_Assembly_3"/>
</dbReference>
<dbReference type="InterPro" id="IPR028217">
    <property type="entry name" value="Rsa3_C"/>
</dbReference>
<dbReference type="PANTHER" id="PTHR28127">
    <property type="entry name" value="RIBOSOME ASSEMBLY PROTEIN 3"/>
    <property type="match status" value="1"/>
</dbReference>
<dbReference type="PANTHER" id="PTHR28127:SF1">
    <property type="entry name" value="RIBOSOME ASSEMBLY PROTEIN 3"/>
    <property type="match status" value="1"/>
</dbReference>
<dbReference type="Pfam" id="PF14615">
    <property type="entry name" value="Rsa3"/>
    <property type="match status" value="1"/>
</dbReference>
<protein>
    <recommendedName>
        <fullName>Ribosome assembly protein 3</fullName>
    </recommendedName>
</protein>
<accession>Q6FX31</accession>
<evidence type="ECO:0000250" key="1"/>
<evidence type="ECO:0000256" key="2">
    <source>
        <dbReference type="SAM" id="MobiDB-lite"/>
    </source>
</evidence>
<evidence type="ECO:0000305" key="3"/>
<sequence>MPSQEIFKTKQRKSTNRRRKKRRTAESESDSDSSSSSAASDIEMTNEEEKNDNNSPIISDVELSDLENESEKRDVYELDKETKNKLANIPLTRTEFTSRKDKSVPINLNAVQNKLEMSEEQLKDRIATDQSKEQDAYLNLMFENFGDELNAFRTASDFNSKTVNILANVLKDGTALFDNETLKSIVKSQI</sequence>
<feature type="chain" id="PRO_0000097463" description="Ribosome assembly protein 3">
    <location>
        <begin position="1"/>
        <end position="190"/>
    </location>
</feature>
<feature type="region of interest" description="Disordered" evidence="2">
    <location>
        <begin position="1"/>
        <end position="72"/>
    </location>
</feature>
<feature type="compositionally biased region" description="Basic residues" evidence="2">
    <location>
        <begin position="9"/>
        <end position="23"/>
    </location>
</feature>
<feature type="compositionally biased region" description="Low complexity" evidence="2">
    <location>
        <begin position="32"/>
        <end position="41"/>
    </location>
</feature>
<reference key="1">
    <citation type="journal article" date="2004" name="Nature">
        <title>Genome evolution in yeasts.</title>
        <authorList>
            <person name="Dujon B."/>
            <person name="Sherman D."/>
            <person name="Fischer G."/>
            <person name="Durrens P."/>
            <person name="Casaregola S."/>
            <person name="Lafontaine I."/>
            <person name="de Montigny J."/>
            <person name="Marck C."/>
            <person name="Neuveglise C."/>
            <person name="Talla E."/>
            <person name="Goffard N."/>
            <person name="Frangeul L."/>
            <person name="Aigle M."/>
            <person name="Anthouard V."/>
            <person name="Babour A."/>
            <person name="Barbe V."/>
            <person name="Barnay S."/>
            <person name="Blanchin S."/>
            <person name="Beckerich J.-M."/>
            <person name="Beyne E."/>
            <person name="Bleykasten C."/>
            <person name="Boisrame A."/>
            <person name="Boyer J."/>
            <person name="Cattolico L."/>
            <person name="Confanioleri F."/>
            <person name="de Daruvar A."/>
            <person name="Despons L."/>
            <person name="Fabre E."/>
            <person name="Fairhead C."/>
            <person name="Ferry-Dumazet H."/>
            <person name="Groppi A."/>
            <person name="Hantraye F."/>
            <person name="Hennequin C."/>
            <person name="Jauniaux N."/>
            <person name="Joyet P."/>
            <person name="Kachouri R."/>
            <person name="Kerrest A."/>
            <person name="Koszul R."/>
            <person name="Lemaire M."/>
            <person name="Lesur I."/>
            <person name="Ma L."/>
            <person name="Muller H."/>
            <person name="Nicaud J.-M."/>
            <person name="Nikolski M."/>
            <person name="Oztas S."/>
            <person name="Ozier-Kalogeropoulos O."/>
            <person name="Pellenz S."/>
            <person name="Potier S."/>
            <person name="Richard G.-F."/>
            <person name="Straub M.-L."/>
            <person name="Suleau A."/>
            <person name="Swennen D."/>
            <person name="Tekaia F."/>
            <person name="Wesolowski-Louvel M."/>
            <person name="Westhof E."/>
            <person name="Wirth B."/>
            <person name="Zeniou-Meyer M."/>
            <person name="Zivanovic Y."/>
            <person name="Bolotin-Fukuhara M."/>
            <person name="Thierry A."/>
            <person name="Bouchier C."/>
            <person name="Caudron B."/>
            <person name="Scarpelli C."/>
            <person name="Gaillardin C."/>
            <person name="Weissenbach J."/>
            <person name="Wincker P."/>
            <person name="Souciet J.-L."/>
        </authorList>
    </citation>
    <scope>NUCLEOTIDE SEQUENCE [LARGE SCALE GENOMIC DNA]</scope>
    <source>
        <strain>ATCC 2001 / BCRC 20586 / JCM 3761 / NBRC 0622 / NRRL Y-65 / CBS 138</strain>
    </source>
</reference>
<keyword id="KW-0539">Nucleus</keyword>
<keyword id="KW-1185">Reference proteome</keyword>
<keyword id="KW-0687">Ribonucleoprotein</keyword>
<keyword id="KW-0690">Ribosome biogenesis</keyword>
<name>RSA3_CANGA</name>